<organism>
    <name type="scientific">Homo sapiens</name>
    <name type="common">Human</name>
    <dbReference type="NCBI Taxonomy" id="9606"/>
    <lineage>
        <taxon>Eukaryota</taxon>
        <taxon>Metazoa</taxon>
        <taxon>Chordata</taxon>
        <taxon>Craniata</taxon>
        <taxon>Vertebrata</taxon>
        <taxon>Euteleostomi</taxon>
        <taxon>Mammalia</taxon>
        <taxon>Eutheria</taxon>
        <taxon>Euarchontoglires</taxon>
        <taxon>Primates</taxon>
        <taxon>Haplorrhini</taxon>
        <taxon>Catarrhini</taxon>
        <taxon>Hominidae</taxon>
        <taxon>Homo</taxon>
    </lineage>
</organism>
<reference key="1">
    <citation type="journal article" date="1990" name="Nucleic Acids Res.">
        <title>Human nonsarcomeric 20,000 Da myosin regulatory light chain cDNA.</title>
        <authorList>
            <person name="Grant J.W."/>
            <person name="Zhong R.Q."/>
            <person name="McEwen P."/>
            <person name="Church S.L."/>
        </authorList>
    </citation>
    <scope>NUCLEOTIDE SEQUENCE [MRNA]</scope>
    <source>
        <tissue>Placenta</tissue>
    </source>
</reference>
<reference key="2">
    <citation type="journal article" date="2001" name="Cell Struct. Funct.">
        <title>Diphosphorylated MRLC is required for organization of stress fibers in interphase cells and the contractile ring in dividing cells.</title>
        <authorList>
            <person name="Iwasaki T."/>
            <person name="Murata-Hori M."/>
            <person name="Ishitobi S."/>
            <person name="Hosoya H."/>
        </authorList>
    </citation>
    <scope>NUCLEOTIDE SEQUENCE [MRNA]</scope>
    <scope>PHOSPHORYLATION AT THR-18 AND SER-19</scope>
</reference>
<reference key="3">
    <citation type="submission" date="2014-01" db="EMBL/GenBank/DDBJ databases">
        <authorList>
            <person name="Li J.Y."/>
            <person name="Wang H.Y."/>
            <person name="Liu F.J."/>
            <person name="Liu J."/>
        </authorList>
    </citation>
    <scope>NUCLEOTIDE SEQUENCE [MRNA]</scope>
</reference>
<reference key="4">
    <citation type="journal article" date="2004" name="Nat. Genet.">
        <title>Complete sequencing and characterization of 21,243 full-length human cDNAs.</title>
        <authorList>
            <person name="Ota T."/>
            <person name="Suzuki Y."/>
            <person name="Nishikawa T."/>
            <person name="Otsuki T."/>
            <person name="Sugiyama T."/>
            <person name="Irie R."/>
            <person name="Wakamatsu A."/>
            <person name="Hayashi K."/>
            <person name="Sato H."/>
            <person name="Nagai K."/>
            <person name="Kimura K."/>
            <person name="Makita H."/>
            <person name="Sekine M."/>
            <person name="Obayashi M."/>
            <person name="Nishi T."/>
            <person name="Shibahara T."/>
            <person name="Tanaka T."/>
            <person name="Ishii S."/>
            <person name="Yamamoto J."/>
            <person name="Saito K."/>
            <person name="Kawai Y."/>
            <person name="Isono Y."/>
            <person name="Nakamura Y."/>
            <person name="Nagahari K."/>
            <person name="Murakami K."/>
            <person name="Yasuda T."/>
            <person name="Iwayanagi T."/>
            <person name="Wagatsuma M."/>
            <person name="Shiratori A."/>
            <person name="Sudo H."/>
            <person name="Hosoiri T."/>
            <person name="Kaku Y."/>
            <person name="Kodaira H."/>
            <person name="Kondo H."/>
            <person name="Sugawara M."/>
            <person name="Takahashi M."/>
            <person name="Kanda K."/>
            <person name="Yokoi T."/>
            <person name="Furuya T."/>
            <person name="Kikkawa E."/>
            <person name="Omura Y."/>
            <person name="Abe K."/>
            <person name="Kamihara K."/>
            <person name="Katsuta N."/>
            <person name="Sato K."/>
            <person name="Tanikawa M."/>
            <person name="Yamazaki M."/>
            <person name="Ninomiya K."/>
            <person name="Ishibashi T."/>
            <person name="Yamashita H."/>
            <person name="Murakawa K."/>
            <person name="Fujimori K."/>
            <person name="Tanai H."/>
            <person name="Kimata M."/>
            <person name="Watanabe M."/>
            <person name="Hiraoka S."/>
            <person name="Chiba Y."/>
            <person name="Ishida S."/>
            <person name="Ono Y."/>
            <person name="Takiguchi S."/>
            <person name="Watanabe S."/>
            <person name="Yosida M."/>
            <person name="Hotuta T."/>
            <person name="Kusano J."/>
            <person name="Kanehori K."/>
            <person name="Takahashi-Fujii A."/>
            <person name="Hara H."/>
            <person name="Tanase T.-O."/>
            <person name="Nomura Y."/>
            <person name="Togiya S."/>
            <person name="Komai F."/>
            <person name="Hara R."/>
            <person name="Takeuchi K."/>
            <person name="Arita M."/>
            <person name="Imose N."/>
            <person name="Musashino K."/>
            <person name="Yuuki H."/>
            <person name="Oshima A."/>
            <person name="Sasaki N."/>
            <person name="Aotsuka S."/>
            <person name="Yoshikawa Y."/>
            <person name="Matsunawa H."/>
            <person name="Ichihara T."/>
            <person name="Shiohata N."/>
            <person name="Sano S."/>
            <person name="Moriya S."/>
            <person name="Momiyama H."/>
            <person name="Satoh N."/>
            <person name="Takami S."/>
            <person name="Terashima Y."/>
            <person name="Suzuki O."/>
            <person name="Nakagawa S."/>
            <person name="Senoh A."/>
            <person name="Mizoguchi H."/>
            <person name="Goto Y."/>
            <person name="Shimizu F."/>
            <person name="Wakebe H."/>
            <person name="Hishigaki H."/>
            <person name="Watanabe T."/>
            <person name="Sugiyama A."/>
            <person name="Takemoto M."/>
            <person name="Kawakami B."/>
            <person name="Yamazaki M."/>
            <person name="Watanabe K."/>
            <person name="Kumagai A."/>
            <person name="Itakura S."/>
            <person name="Fukuzumi Y."/>
            <person name="Fujimori Y."/>
            <person name="Komiyama M."/>
            <person name="Tashiro H."/>
            <person name="Tanigami A."/>
            <person name="Fujiwara T."/>
            <person name="Ono T."/>
            <person name="Yamada K."/>
            <person name="Fujii Y."/>
            <person name="Ozaki K."/>
            <person name="Hirao M."/>
            <person name="Ohmori Y."/>
            <person name="Kawabata A."/>
            <person name="Hikiji T."/>
            <person name="Kobatake N."/>
            <person name="Inagaki H."/>
            <person name="Ikema Y."/>
            <person name="Okamoto S."/>
            <person name="Okitani R."/>
            <person name="Kawakami T."/>
            <person name="Noguchi S."/>
            <person name="Itoh T."/>
            <person name="Shigeta K."/>
            <person name="Senba T."/>
            <person name="Matsumura K."/>
            <person name="Nakajima Y."/>
            <person name="Mizuno T."/>
            <person name="Morinaga M."/>
            <person name="Sasaki M."/>
            <person name="Togashi T."/>
            <person name="Oyama M."/>
            <person name="Hata H."/>
            <person name="Watanabe M."/>
            <person name="Komatsu T."/>
            <person name="Mizushima-Sugano J."/>
            <person name="Satoh T."/>
            <person name="Shirai Y."/>
            <person name="Takahashi Y."/>
            <person name="Nakagawa K."/>
            <person name="Okumura K."/>
            <person name="Nagase T."/>
            <person name="Nomura N."/>
            <person name="Kikuchi H."/>
            <person name="Masuho Y."/>
            <person name="Yamashita R."/>
            <person name="Nakai K."/>
            <person name="Yada T."/>
            <person name="Nakamura Y."/>
            <person name="Ohara O."/>
            <person name="Isogai T."/>
            <person name="Sugano S."/>
        </authorList>
    </citation>
    <scope>NUCLEOTIDE SEQUENCE [LARGE SCALE MRNA]</scope>
</reference>
<reference key="5">
    <citation type="submission" date="2005-09" db="EMBL/GenBank/DDBJ databases">
        <authorList>
            <person name="Mural R.J."/>
            <person name="Istrail S."/>
            <person name="Sutton G."/>
            <person name="Florea L."/>
            <person name="Halpern A.L."/>
            <person name="Mobarry C.M."/>
            <person name="Lippert R."/>
            <person name="Walenz B."/>
            <person name="Shatkay H."/>
            <person name="Dew I."/>
            <person name="Miller J.R."/>
            <person name="Flanigan M.J."/>
            <person name="Edwards N.J."/>
            <person name="Bolanos R."/>
            <person name="Fasulo D."/>
            <person name="Halldorsson B.V."/>
            <person name="Hannenhalli S."/>
            <person name="Turner R."/>
            <person name="Yooseph S."/>
            <person name="Lu F."/>
            <person name="Nusskern D.R."/>
            <person name="Shue B.C."/>
            <person name="Zheng X.H."/>
            <person name="Zhong F."/>
            <person name="Delcher A.L."/>
            <person name="Huson D.H."/>
            <person name="Kravitz S.A."/>
            <person name="Mouchard L."/>
            <person name="Reinert K."/>
            <person name="Remington K.A."/>
            <person name="Clark A.G."/>
            <person name="Waterman M.S."/>
            <person name="Eichler E.E."/>
            <person name="Adams M.D."/>
            <person name="Hunkapiller M.W."/>
            <person name="Myers E.W."/>
            <person name="Venter J.C."/>
        </authorList>
    </citation>
    <scope>NUCLEOTIDE SEQUENCE [LARGE SCALE GENOMIC DNA]</scope>
</reference>
<reference key="6">
    <citation type="journal article" date="2004" name="Genome Res.">
        <title>The status, quality, and expansion of the NIH full-length cDNA project: the Mammalian Gene Collection (MGC).</title>
        <authorList>
            <consortium name="The MGC Project Team"/>
        </authorList>
    </citation>
    <scope>NUCLEOTIDE SEQUENCE [LARGE SCALE MRNA]</scope>
    <source>
        <tissue>Skeletal muscle</tissue>
        <tissue>Skin</tissue>
        <tissue>Testis</tissue>
    </source>
</reference>
<reference key="7">
    <citation type="journal article" date="2014" name="J. Proteomics">
        <title>An enzyme assisted RP-RPLC approach for in-depth analysis of human liver phosphoproteome.</title>
        <authorList>
            <person name="Bian Y."/>
            <person name="Song C."/>
            <person name="Cheng K."/>
            <person name="Dong M."/>
            <person name="Wang F."/>
            <person name="Huang J."/>
            <person name="Sun D."/>
            <person name="Wang L."/>
            <person name="Ye M."/>
            <person name="Zou H."/>
        </authorList>
    </citation>
    <scope>IDENTIFICATION BY MASS SPECTROMETRY [LARGE SCALE ANALYSIS]</scope>
    <source>
        <tissue>Liver</tissue>
    </source>
</reference>
<proteinExistence type="evidence at protein level"/>
<feature type="chain" id="PRO_0000198733" description="Myosin regulatory light chain 12A">
    <location>
        <begin position="1"/>
        <end position="171"/>
    </location>
</feature>
<feature type="domain" description="EF-hand 1" evidence="2">
    <location>
        <begin position="28"/>
        <end position="63"/>
    </location>
</feature>
<feature type="domain" description="EF-hand 2" evidence="2">
    <location>
        <begin position="97"/>
        <end position="132"/>
    </location>
</feature>
<feature type="domain" description="EF-hand 3" evidence="2">
    <location>
        <begin position="133"/>
        <end position="168"/>
    </location>
</feature>
<feature type="binding site" evidence="2">
    <location>
        <position position="41"/>
    </location>
    <ligand>
        <name>Ca(2+)</name>
        <dbReference type="ChEBI" id="CHEBI:29108"/>
    </ligand>
</feature>
<feature type="binding site" evidence="2">
    <location>
        <position position="43"/>
    </location>
    <ligand>
        <name>Ca(2+)</name>
        <dbReference type="ChEBI" id="CHEBI:29108"/>
    </ligand>
</feature>
<feature type="binding site" evidence="2">
    <location>
        <position position="45"/>
    </location>
    <ligand>
        <name>Ca(2+)</name>
        <dbReference type="ChEBI" id="CHEBI:29108"/>
    </ligand>
</feature>
<feature type="binding site" evidence="2">
    <location>
        <position position="52"/>
    </location>
    <ligand>
        <name>Ca(2+)</name>
        <dbReference type="ChEBI" id="CHEBI:29108"/>
    </ligand>
</feature>
<feature type="modified residue" description="Phosphothreonine; by MLCK" evidence="3">
    <location>
        <position position="18"/>
    </location>
</feature>
<feature type="modified residue" description="Phosphoserine; by MLCK" evidence="3">
    <location>
        <position position="19"/>
    </location>
</feature>
<sequence length="171" mass="19794">MSSKRTKTKTKKRPQRATSNVFAMFDQSQIQEFKEAFNMIDQNRDGFIDKEDLHDMLASLGKNPTDEYLDAMMNEAPGPINFTMFLTMFGEKLNGTDPEDVIRNAFACFDEEATGTIQEDYLRELLTTMGDRFTDEEVDELYREAPIDKKGNFNYIEFTRILKHGAKDKDD</sequence>
<protein>
    <recommendedName>
        <fullName>Myosin regulatory light chain 12A</fullName>
    </recommendedName>
    <alternativeName>
        <fullName>Epididymis secretory protein Li 24</fullName>
        <shortName>HEL-S-24</shortName>
    </alternativeName>
    <alternativeName>
        <fullName>MLC-2B</fullName>
    </alternativeName>
    <alternativeName>
        <fullName>Myosin RLC</fullName>
    </alternativeName>
    <alternativeName>
        <fullName>Myosin regulatory light chain 2, nonsarcomeric</fullName>
    </alternativeName>
    <alternativeName>
        <fullName>Myosin regulatory light chain MRLC3</fullName>
    </alternativeName>
</protein>
<dbReference type="EMBL" id="X54304">
    <property type="protein sequence ID" value="CAA38201.1"/>
    <property type="molecule type" value="mRNA"/>
</dbReference>
<dbReference type="EMBL" id="D82059">
    <property type="protein sequence ID" value="BAB88919.1"/>
    <property type="molecule type" value="mRNA"/>
</dbReference>
<dbReference type="EMBL" id="EU794621">
    <property type="protein sequence ID" value="ACJ13675.1"/>
    <property type="molecule type" value="mRNA"/>
</dbReference>
<dbReference type="EMBL" id="AK291145">
    <property type="protein sequence ID" value="BAF83834.1"/>
    <property type="molecule type" value="mRNA"/>
</dbReference>
<dbReference type="EMBL" id="CH471113">
    <property type="protein sequence ID" value="EAX01678.1"/>
    <property type="molecule type" value="Genomic_DNA"/>
</dbReference>
<dbReference type="EMBL" id="CH471113">
    <property type="protein sequence ID" value="EAX01680.1"/>
    <property type="molecule type" value="Genomic_DNA"/>
</dbReference>
<dbReference type="EMBL" id="CH471113">
    <property type="protein sequence ID" value="EAX01681.1"/>
    <property type="molecule type" value="Genomic_DNA"/>
</dbReference>
<dbReference type="EMBL" id="BC016372">
    <property type="protein sequence ID" value="AAH16372.1"/>
    <property type="molecule type" value="mRNA"/>
</dbReference>
<dbReference type="EMBL" id="BC031972">
    <property type="protein sequence ID" value="AAH31972.1"/>
    <property type="molecule type" value="mRNA"/>
</dbReference>
<dbReference type="EMBL" id="BC032748">
    <property type="protein sequence ID" value="AAH32748.1"/>
    <property type="molecule type" value="mRNA"/>
</dbReference>
<dbReference type="CCDS" id="CCDS11830.1"/>
<dbReference type="PIR" id="S11493">
    <property type="entry name" value="MOHULP"/>
</dbReference>
<dbReference type="RefSeq" id="NP_001289976.1">
    <property type="nucleotide sequence ID" value="NM_001303047.2"/>
</dbReference>
<dbReference type="RefSeq" id="NP_001289977.1">
    <property type="nucleotide sequence ID" value="NM_001303048.1"/>
</dbReference>
<dbReference type="RefSeq" id="NP_001289978.1">
    <property type="nucleotide sequence ID" value="NM_001303049.1"/>
</dbReference>
<dbReference type="RefSeq" id="NP_006462.1">
    <property type="nucleotide sequence ID" value="NM_006471.4"/>
</dbReference>
<dbReference type="SMR" id="P19105"/>
<dbReference type="BioGRID" id="115871">
    <property type="interactions" value="207"/>
</dbReference>
<dbReference type="CORUM" id="P19105"/>
<dbReference type="FunCoup" id="P19105">
    <property type="interactions" value="1327"/>
</dbReference>
<dbReference type="IntAct" id="P19105">
    <property type="interactions" value="70"/>
</dbReference>
<dbReference type="MINT" id="P19105"/>
<dbReference type="STRING" id="9606.ENSP00000464359"/>
<dbReference type="DrugBank" id="DB08378">
    <property type="generic name" value="4-[4-(2,5-DIOXO-PYRROLIDIN-1-YL)-PHENYLAMINO]-4-HYDROXY-BUTYRIC ACID"/>
</dbReference>
<dbReference type="GlyCosmos" id="P19105">
    <property type="glycosylation" value="1 site, 1 glycan"/>
</dbReference>
<dbReference type="GlyGen" id="P19105">
    <property type="glycosylation" value="2 sites, 1 O-linked glycan (1 site)"/>
</dbReference>
<dbReference type="iPTMnet" id="P19105"/>
<dbReference type="MetOSite" id="P19105"/>
<dbReference type="PhosphoSitePlus" id="P19105"/>
<dbReference type="SwissPalm" id="P19105"/>
<dbReference type="BioMuta" id="MYL12A"/>
<dbReference type="DMDM" id="127169"/>
<dbReference type="OGP" id="P19105"/>
<dbReference type="jPOST" id="P19105"/>
<dbReference type="MassIVE" id="P19105"/>
<dbReference type="PaxDb" id="9606-ENSP00000217652"/>
<dbReference type="PeptideAtlas" id="P19105"/>
<dbReference type="ProteomicsDB" id="53633"/>
<dbReference type="Pumba" id="P19105"/>
<dbReference type="TopDownProteomics" id="P19105"/>
<dbReference type="Antibodypedia" id="3856">
    <property type="antibodies" value="164 antibodies from 31 providers"/>
</dbReference>
<dbReference type="DNASU" id="10627"/>
<dbReference type="Ensembl" id="ENST00000217652.8">
    <property type="protein sequence ID" value="ENSP00000217652.3"/>
    <property type="gene ID" value="ENSG00000101608.13"/>
</dbReference>
<dbReference type="Ensembl" id="ENST00000536605.1">
    <property type="protein sequence ID" value="ENSP00000441231.1"/>
    <property type="gene ID" value="ENSG00000101608.13"/>
</dbReference>
<dbReference type="Ensembl" id="ENST00000578611.5">
    <property type="protein sequence ID" value="ENSP00000463614.1"/>
    <property type="gene ID" value="ENSG00000101608.13"/>
</dbReference>
<dbReference type="Ensembl" id="ENST00000579226.5">
    <property type="protein sequence ID" value="ENSP00000462171.1"/>
    <property type="gene ID" value="ENSG00000101608.13"/>
</dbReference>
<dbReference type="GeneID" id="10627"/>
<dbReference type="KEGG" id="hsa:10627"/>
<dbReference type="MANE-Select" id="ENST00000217652.8">
    <property type="protein sequence ID" value="ENSP00000217652.3"/>
    <property type="RefSeq nucleotide sequence ID" value="NM_006471.4"/>
    <property type="RefSeq protein sequence ID" value="NP_006462.1"/>
</dbReference>
<dbReference type="UCSC" id="uc002klr.3">
    <property type="organism name" value="human"/>
</dbReference>
<dbReference type="AGR" id="HGNC:16701"/>
<dbReference type="CTD" id="10627"/>
<dbReference type="DisGeNET" id="10627"/>
<dbReference type="GeneCards" id="MYL12A"/>
<dbReference type="HGNC" id="HGNC:16701">
    <property type="gene designation" value="MYL12A"/>
</dbReference>
<dbReference type="HPA" id="ENSG00000101608">
    <property type="expression patterns" value="Group enriched (heart muscle, skeletal muscle, tongue)"/>
</dbReference>
<dbReference type="MIM" id="609211">
    <property type="type" value="gene"/>
</dbReference>
<dbReference type="neXtProt" id="NX_P19105"/>
<dbReference type="OpenTargets" id="ENSG00000101608"/>
<dbReference type="PharmGKB" id="PA164723273"/>
<dbReference type="VEuPathDB" id="HostDB:ENSG00000101608"/>
<dbReference type="eggNOG" id="KOG0031">
    <property type="taxonomic scope" value="Eukaryota"/>
</dbReference>
<dbReference type="GeneTree" id="ENSGT00940000153607"/>
<dbReference type="InParanoid" id="P19105"/>
<dbReference type="OMA" id="KEDSHDM"/>
<dbReference type="OrthoDB" id="9520007at2759"/>
<dbReference type="PAN-GO" id="P19105">
    <property type="GO annotations" value="3 GO annotations based on evolutionary models"/>
</dbReference>
<dbReference type="PhylomeDB" id="P19105"/>
<dbReference type="TreeFam" id="TF314218"/>
<dbReference type="PathwayCommons" id="P19105"/>
<dbReference type="Reactome" id="R-HSA-3928664">
    <property type="pathway name" value="Ephrin signaling"/>
</dbReference>
<dbReference type="Reactome" id="R-HSA-445355">
    <property type="pathway name" value="Smooth Muscle Contraction"/>
</dbReference>
<dbReference type="SignaLink" id="P19105"/>
<dbReference type="SIGNOR" id="P19105"/>
<dbReference type="BioGRID-ORCS" id="10627">
    <property type="hits" value="89 hits in 1078 CRISPR screens"/>
</dbReference>
<dbReference type="ChiTaRS" id="MYL12A">
    <property type="organism name" value="human"/>
</dbReference>
<dbReference type="GeneWiki" id="MRCL3"/>
<dbReference type="GenomeRNAi" id="10627"/>
<dbReference type="Pharos" id="P19105">
    <property type="development level" value="Tbio"/>
</dbReference>
<dbReference type="PRO" id="PR:P19105"/>
<dbReference type="Proteomes" id="UP000005640">
    <property type="component" value="Chromosome 18"/>
</dbReference>
<dbReference type="RNAct" id="P19105">
    <property type="molecule type" value="protein"/>
</dbReference>
<dbReference type="Bgee" id="ENSG00000101608">
    <property type="expression patterns" value="Expressed in apex of heart and 163 other cell types or tissues"/>
</dbReference>
<dbReference type="ExpressionAtlas" id="P19105">
    <property type="expression patterns" value="baseline and differential"/>
</dbReference>
<dbReference type="GO" id="GO:0005737">
    <property type="term" value="C:cytoplasm"/>
    <property type="evidence" value="ECO:0000318"/>
    <property type="project" value="GO_Central"/>
</dbReference>
<dbReference type="GO" id="GO:0005829">
    <property type="term" value="C:cytosol"/>
    <property type="evidence" value="ECO:0000304"/>
    <property type="project" value="Reactome"/>
</dbReference>
<dbReference type="GO" id="GO:0070062">
    <property type="term" value="C:extracellular exosome"/>
    <property type="evidence" value="ECO:0007005"/>
    <property type="project" value="UniProtKB"/>
</dbReference>
<dbReference type="GO" id="GO:0016460">
    <property type="term" value="C:myosin II complex"/>
    <property type="evidence" value="ECO:0000318"/>
    <property type="project" value="GO_Central"/>
</dbReference>
<dbReference type="GO" id="GO:0005509">
    <property type="term" value="F:calcium ion binding"/>
    <property type="evidence" value="ECO:0007669"/>
    <property type="project" value="InterPro"/>
</dbReference>
<dbReference type="GO" id="GO:0032036">
    <property type="term" value="F:myosin heavy chain binding"/>
    <property type="evidence" value="ECO:0000318"/>
    <property type="project" value="GO_Central"/>
</dbReference>
<dbReference type="GO" id="GO:0070527">
    <property type="term" value="P:platelet aggregation"/>
    <property type="evidence" value="ECO:0007001"/>
    <property type="project" value="UniProtKB"/>
</dbReference>
<dbReference type="CDD" id="cd00051">
    <property type="entry name" value="EFh"/>
    <property type="match status" value="1"/>
</dbReference>
<dbReference type="FunFam" id="1.10.238.10:FF:000010">
    <property type="entry name" value="Myosin regulatory light chain 2, atrial isoform"/>
    <property type="match status" value="1"/>
</dbReference>
<dbReference type="FunFam" id="1.10.238.10:FF:000007">
    <property type="entry name" value="Putative myosin regulatory light chain sqh"/>
    <property type="match status" value="1"/>
</dbReference>
<dbReference type="Gene3D" id="1.10.238.10">
    <property type="entry name" value="EF-hand"/>
    <property type="match status" value="2"/>
</dbReference>
<dbReference type="InterPro" id="IPR011992">
    <property type="entry name" value="EF-hand-dom_pair"/>
</dbReference>
<dbReference type="InterPro" id="IPR018247">
    <property type="entry name" value="EF_Hand_1_Ca_BS"/>
</dbReference>
<dbReference type="InterPro" id="IPR015070">
    <property type="entry name" value="EF_hand_DJBP"/>
</dbReference>
<dbReference type="InterPro" id="IPR002048">
    <property type="entry name" value="EF_hand_dom"/>
</dbReference>
<dbReference type="InterPro" id="IPR050403">
    <property type="entry name" value="Myosin_RLC"/>
</dbReference>
<dbReference type="PANTHER" id="PTHR23049">
    <property type="entry name" value="MYOSIN REGULATORY LIGHT CHAIN 2"/>
    <property type="match status" value="1"/>
</dbReference>
<dbReference type="Pfam" id="PF08976">
    <property type="entry name" value="EF-hand_11"/>
    <property type="match status" value="1"/>
</dbReference>
<dbReference type="Pfam" id="PF13499">
    <property type="entry name" value="EF-hand_7"/>
    <property type="match status" value="1"/>
</dbReference>
<dbReference type="SMART" id="SM00054">
    <property type="entry name" value="EFh"/>
    <property type="match status" value="2"/>
</dbReference>
<dbReference type="SUPFAM" id="SSF47473">
    <property type="entry name" value="EF-hand"/>
    <property type="match status" value="1"/>
</dbReference>
<dbReference type="PROSITE" id="PS00018">
    <property type="entry name" value="EF_HAND_1"/>
    <property type="match status" value="1"/>
</dbReference>
<dbReference type="PROSITE" id="PS50222">
    <property type="entry name" value="EF_HAND_2"/>
    <property type="match status" value="3"/>
</dbReference>
<name>ML12A_HUMAN</name>
<gene>
    <name type="primary">MYL12A</name>
    <name type="synonym">MLCB</name>
    <name type="synonym">MRLC3</name>
    <name type="synonym">RLC</name>
</gene>
<evidence type="ECO:0000250" key="1"/>
<evidence type="ECO:0000255" key="2">
    <source>
        <dbReference type="PROSITE-ProRule" id="PRU00448"/>
    </source>
</evidence>
<evidence type="ECO:0000269" key="3">
    <source>
    </source>
</evidence>
<accession>P19105</accession>
<accession>Q53X45</accession>
<keyword id="KW-0106">Calcium</keyword>
<keyword id="KW-0479">Metal-binding</keyword>
<keyword id="KW-0505">Motor protein</keyword>
<keyword id="KW-0514">Muscle protein</keyword>
<keyword id="KW-0518">Myosin</keyword>
<keyword id="KW-0597">Phosphoprotein</keyword>
<keyword id="KW-1267">Proteomics identification</keyword>
<keyword id="KW-1185">Reference proteome</keyword>
<keyword id="KW-0677">Repeat</keyword>
<comment type="function">
    <text evidence="1">Myosin regulatory subunit that plays an important role in regulation of both smooth muscle and nonmuscle cell contractile activity via its phosphorylation. Implicated in cytokinesis, receptor capping, and cell locomotion (By similarity).</text>
</comment>
<comment type="subunit">
    <text>Myosin is a hexamer of 2 heavy chains and 4 light chains.</text>
</comment>
<comment type="interaction">
    <interactant intactId="EBI-354418">
        <id>P19105</id>
    </interactant>
    <interactant intactId="EBI-1569209">
        <id>Q62868</id>
        <label>Rock2</label>
    </interactant>
    <organismsDiffer>true</organismsDiffer>
    <experiments>2</experiments>
</comment>
<comment type="PTM">
    <text evidence="1">Phosphorylation increases the actin-activated myosin ATPase activity and thereby regulates the contractile activity. It is required to generate the driving force in the migration of the cells but not necessary for localization of myosin-2 at the leading edge (By similarity).</text>
</comment>
<comment type="miscellaneous">
    <text>This chain binds calcium.</text>
</comment>